<proteinExistence type="predicted"/>
<evidence type="ECO:0000305" key="1"/>
<comment type="sequence caution" evidence="1">
    <conflict type="erroneous initiation">
        <sequence resource="EMBL-CDS" id="AAK48258"/>
    </conflict>
</comment>
<sequence>MVTVARRPVCPVTLTPGDPALASVRDLVDAWSAHDALAELVTMFGGAFPQTDHLEARLASLDKFSTAWDYRARARAARALHGEPVRCQDSGGGARWLIPRLDLPAKKRDAIVGLAQQLGLTLESTPQGTTFDHVLVIGTGRHSNLIRARWARELAKGRQVGHIVLAAASRRLLPSEDDAVAVCAPGARTEFELLAAAARDAFGLDVHPAVRYVRQRDDNPHRDSMVWRFAADTNDLGVPITLLEAPSPEPDSSRATSADTFTFTAHTLGMQDSTCLLVTGQPFVPYQNFDALRTLALPFGIQVETVGFGIDRYDGLGELDQQHPAKLLQEVRSTIRAARALLERIEAGERMATDPRR</sequence>
<dbReference type="EMBL" id="AE000516">
    <property type="protein sequence ID" value="AAK48258.1"/>
    <property type="status" value="ALT_INIT"/>
    <property type="molecule type" value="Genomic_DNA"/>
</dbReference>
<dbReference type="PIR" id="E70696">
    <property type="entry name" value="E70696"/>
</dbReference>
<dbReference type="RefSeq" id="WP_003420615.1">
    <property type="nucleotide sequence ID" value="NZ_KK341227.1"/>
</dbReference>
<dbReference type="KEGG" id="mtc:MT3893"/>
<dbReference type="PATRIC" id="fig|83331.31.peg.4188"/>
<dbReference type="HOGENOM" id="CLU_387729_0_0_11"/>
<dbReference type="Proteomes" id="UP000001020">
    <property type="component" value="Chromosome"/>
</dbReference>
<organism>
    <name type="scientific">Mycobacterium tuberculosis (strain CDC 1551 / Oshkosh)</name>
    <dbReference type="NCBI Taxonomy" id="83331"/>
    <lineage>
        <taxon>Bacteria</taxon>
        <taxon>Bacillati</taxon>
        <taxon>Actinomycetota</taxon>
        <taxon>Actinomycetes</taxon>
        <taxon>Mycobacteriales</taxon>
        <taxon>Mycobacteriaceae</taxon>
        <taxon>Mycobacterium</taxon>
        <taxon>Mycobacterium tuberculosis complex</taxon>
    </lineage>
</organism>
<name>Y3785_MYCTO</name>
<keyword id="KW-1185">Reference proteome</keyword>
<protein>
    <recommendedName>
        <fullName>Uncharacterized protein MT3893</fullName>
    </recommendedName>
</protein>
<accession>P9WKX0</accession>
<accession>L0TDS6</accession>
<accession>P65093</accession>
<accession>P72051</accession>
<reference key="1">
    <citation type="journal article" date="2002" name="J. Bacteriol.">
        <title>Whole-genome comparison of Mycobacterium tuberculosis clinical and laboratory strains.</title>
        <authorList>
            <person name="Fleischmann R.D."/>
            <person name="Alland D."/>
            <person name="Eisen J.A."/>
            <person name="Carpenter L."/>
            <person name="White O."/>
            <person name="Peterson J.D."/>
            <person name="DeBoy R.T."/>
            <person name="Dodson R.J."/>
            <person name="Gwinn M.L."/>
            <person name="Haft D.H."/>
            <person name="Hickey E.K."/>
            <person name="Kolonay J.F."/>
            <person name="Nelson W.C."/>
            <person name="Umayam L.A."/>
            <person name="Ermolaeva M.D."/>
            <person name="Salzberg S.L."/>
            <person name="Delcher A."/>
            <person name="Utterback T.R."/>
            <person name="Weidman J.F."/>
            <person name="Khouri H.M."/>
            <person name="Gill J."/>
            <person name="Mikula A."/>
            <person name="Bishai W."/>
            <person name="Jacobs W.R. Jr."/>
            <person name="Venter J.C."/>
            <person name="Fraser C.M."/>
        </authorList>
    </citation>
    <scope>NUCLEOTIDE SEQUENCE [LARGE SCALE GENOMIC DNA]</scope>
    <source>
        <strain>CDC 1551 / Oshkosh</strain>
    </source>
</reference>
<feature type="chain" id="PRO_0000427580" description="Uncharacterized protein MT3893">
    <location>
        <begin position="1"/>
        <end position="357"/>
    </location>
</feature>
<gene>
    <name type="ordered locus">MT3893</name>
</gene>